<feature type="chain" id="PRO_1000013028" description="UPF0145 protein YbjQ">
    <location>
        <begin position="1"/>
        <end position="107"/>
    </location>
</feature>
<name>YBJQ_SHIF8</name>
<proteinExistence type="inferred from homology"/>
<protein>
    <recommendedName>
        <fullName evidence="1">UPF0145 protein YbjQ</fullName>
    </recommendedName>
</protein>
<gene>
    <name evidence="1" type="primary">ybjQ</name>
    <name type="ordered locus">SFV_0854</name>
</gene>
<organism>
    <name type="scientific">Shigella flexneri serotype 5b (strain 8401)</name>
    <dbReference type="NCBI Taxonomy" id="373384"/>
    <lineage>
        <taxon>Bacteria</taxon>
        <taxon>Pseudomonadati</taxon>
        <taxon>Pseudomonadota</taxon>
        <taxon>Gammaproteobacteria</taxon>
        <taxon>Enterobacterales</taxon>
        <taxon>Enterobacteriaceae</taxon>
        <taxon>Shigella</taxon>
    </lineage>
</organism>
<sequence>MQFSTTPTLEGQTIVEYCGVVTGEAILGANIFRDFFAGIRDIVGGRSGAYEKELRKAREIAFEELGSQARALGADAVVGIDIDYETVGQNGSMLMVSVSGTAVKTRR</sequence>
<comment type="similarity">
    <text evidence="1">Belongs to the UPF0145 family.</text>
</comment>
<accession>Q0T8L9</accession>
<evidence type="ECO:0000255" key="1">
    <source>
        <dbReference type="HAMAP-Rule" id="MF_00338"/>
    </source>
</evidence>
<reference key="1">
    <citation type="journal article" date="2006" name="BMC Genomics">
        <title>Complete genome sequence of Shigella flexneri 5b and comparison with Shigella flexneri 2a.</title>
        <authorList>
            <person name="Nie H."/>
            <person name="Yang F."/>
            <person name="Zhang X."/>
            <person name="Yang J."/>
            <person name="Chen L."/>
            <person name="Wang J."/>
            <person name="Xiong Z."/>
            <person name="Peng J."/>
            <person name="Sun L."/>
            <person name="Dong J."/>
            <person name="Xue Y."/>
            <person name="Xu X."/>
            <person name="Chen S."/>
            <person name="Yao Z."/>
            <person name="Shen Y."/>
            <person name="Jin Q."/>
        </authorList>
    </citation>
    <scope>NUCLEOTIDE SEQUENCE [LARGE SCALE GENOMIC DNA]</scope>
    <source>
        <strain>8401</strain>
    </source>
</reference>
<dbReference type="EMBL" id="CP000266">
    <property type="protein sequence ID" value="ABF03081.1"/>
    <property type="molecule type" value="Genomic_DNA"/>
</dbReference>
<dbReference type="RefSeq" id="WP_001160737.1">
    <property type="nucleotide sequence ID" value="NC_008258.1"/>
</dbReference>
<dbReference type="SMR" id="Q0T8L9"/>
<dbReference type="KEGG" id="sfv:SFV_0854"/>
<dbReference type="HOGENOM" id="CLU_117144_3_0_6"/>
<dbReference type="Proteomes" id="UP000000659">
    <property type="component" value="Chromosome"/>
</dbReference>
<dbReference type="Gene3D" id="3.30.110.70">
    <property type="entry name" value="Hypothetical protein apc22750. Chain B"/>
    <property type="match status" value="1"/>
</dbReference>
<dbReference type="HAMAP" id="MF_00338">
    <property type="entry name" value="UPF0145"/>
    <property type="match status" value="1"/>
</dbReference>
<dbReference type="InterPro" id="IPR035439">
    <property type="entry name" value="UPF0145_dom_sf"/>
</dbReference>
<dbReference type="InterPro" id="IPR002765">
    <property type="entry name" value="UPF0145_YbjQ-like"/>
</dbReference>
<dbReference type="NCBIfam" id="NF002776">
    <property type="entry name" value="PRK02877.1"/>
    <property type="match status" value="1"/>
</dbReference>
<dbReference type="PANTHER" id="PTHR34068">
    <property type="entry name" value="UPF0145 PROTEIN YBJQ"/>
    <property type="match status" value="1"/>
</dbReference>
<dbReference type="PANTHER" id="PTHR34068:SF1">
    <property type="entry name" value="UPF0145 PROTEIN YBJQ"/>
    <property type="match status" value="1"/>
</dbReference>
<dbReference type="Pfam" id="PF01906">
    <property type="entry name" value="YbjQ_1"/>
    <property type="match status" value="1"/>
</dbReference>
<dbReference type="SUPFAM" id="SSF117782">
    <property type="entry name" value="YbjQ-like"/>
    <property type="match status" value="1"/>
</dbReference>